<gene>
    <name type="primary">PDH1</name>
</gene>
<reference key="1">
    <citation type="journal article" date="1994" name="Biochem. Biophys. Res. Commun.">
        <title>Molecular cloning of two pigment-dispersing hormone (PDH) precursors in the blue crab Callinectes sapidus reveals a novel member of the PDH neuropeptide family.</title>
        <authorList>
            <person name="Klein J.M."/>
            <person name="Mohrherr C.J."/>
            <person name="Sleutels F."/>
            <person name="Riehm J.P."/>
            <person name="Rao K.R."/>
        </authorList>
    </citation>
    <scope>NUCLEOTIDE SEQUENCE [MRNA]</scope>
    <source>
        <tissue>Eyestalk</tissue>
    </source>
</reference>
<proteinExistence type="evidence at transcript level"/>
<organism>
    <name type="scientific">Callinectes sapidus</name>
    <name type="common">Blue crab</name>
    <dbReference type="NCBI Taxonomy" id="6763"/>
    <lineage>
        <taxon>Eukaryota</taxon>
        <taxon>Metazoa</taxon>
        <taxon>Ecdysozoa</taxon>
        <taxon>Arthropoda</taxon>
        <taxon>Crustacea</taxon>
        <taxon>Multicrustacea</taxon>
        <taxon>Malacostraca</taxon>
        <taxon>Eumalacostraca</taxon>
        <taxon>Eucarida</taxon>
        <taxon>Decapoda</taxon>
        <taxon>Pleocyemata</taxon>
        <taxon>Brachyura</taxon>
        <taxon>Eubrachyura</taxon>
        <taxon>Portunoidea</taxon>
        <taxon>Portunidae</taxon>
        <taxon>Portuninae</taxon>
        <taxon>Callinectes</taxon>
    </lineage>
</organism>
<dbReference type="EMBL" id="L36716">
    <property type="protein sequence ID" value="AAA67052.1"/>
    <property type="molecule type" value="mRNA"/>
</dbReference>
<dbReference type="PIR" id="JC2428">
    <property type="entry name" value="JC2428"/>
</dbReference>
<dbReference type="GO" id="GO:0005576">
    <property type="term" value="C:extracellular region"/>
    <property type="evidence" value="ECO:0007669"/>
    <property type="project" value="UniProtKB-SubCell"/>
</dbReference>
<dbReference type="GO" id="GO:0045202">
    <property type="term" value="C:synapse"/>
    <property type="evidence" value="ECO:0007669"/>
    <property type="project" value="GOC"/>
</dbReference>
<dbReference type="GO" id="GO:0005179">
    <property type="term" value="F:hormone activity"/>
    <property type="evidence" value="ECO:0007669"/>
    <property type="project" value="UniProtKB-KW"/>
</dbReference>
<dbReference type="GO" id="GO:0007268">
    <property type="term" value="P:chemical synaptic transmission"/>
    <property type="evidence" value="ECO:0007669"/>
    <property type="project" value="UniProtKB-KW"/>
</dbReference>
<dbReference type="GO" id="GO:0009416">
    <property type="term" value="P:response to light stimulus"/>
    <property type="evidence" value="ECO:0007669"/>
    <property type="project" value="InterPro"/>
</dbReference>
<dbReference type="InterPro" id="IPR009396">
    <property type="entry name" value="Pigment_DH"/>
</dbReference>
<dbReference type="Pfam" id="PF06324">
    <property type="entry name" value="Pigment_DH"/>
    <property type="match status" value="1"/>
</dbReference>
<keyword id="KW-0027">Amidation</keyword>
<keyword id="KW-0165">Cleavage on pair of basic residues</keyword>
<keyword id="KW-0372">Hormone</keyword>
<keyword id="KW-0529">Neurotransmitter</keyword>
<keyword id="KW-0964">Secreted</keyword>
<keyword id="KW-0732">Signal</keyword>
<name>PDH1_CALSI</name>
<comment type="function">
    <text evidence="1">The pigment-dispersing hormone causes the migration of the distal retinal pigment into the proximal end of the pigment chromatophore cells and thus decreases the amount of light entering the retinulas. May also function as a neurotransmitter and/or neuromodulator (By similarity).</text>
</comment>
<comment type="subcellular location">
    <subcellularLocation>
        <location>Secreted</location>
    </subcellularLocation>
</comment>
<comment type="tissue specificity">
    <text>Eyestalk sinus gland.</text>
</comment>
<comment type="similarity">
    <text evidence="3">Belongs to the arthropod PDH family.</text>
</comment>
<sequence length="78" mass="8539">MRSSVIVAVLVVVALAALLTQGQELKYQEREMVAELAQQIYRVAQAPWAAAVGPHKRNSELINSILGLPKVMNDAGRR</sequence>
<feature type="signal peptide" evidence="2">
    <location>
        <begin position="1"/>
        <end position="22"/>
    </location>
</feature>
<feature type="peptide" id="PRO_0000023427" description="PDH precursor-related peptide 1">
    <location>
        <begin position="23"/>
        <end position="55"/>
    </location>
</feature>
<feature type="peptide" id="PRO_0000023428" description="Pigment-dispersing hormone 1">
    <location>
        <begin position="58"/>
        <end position="75"/>
    </location>
</feature>
<feature type="modified residue" description="Alanine amide" evidence="1">
    <location>
        <position position="75"/>
    </location>
</feature>
<evidence type="ECO:0000250" key="1"/>
<evidence type="ECO:0000255" key="2"/>
<evidence type="ECO:0000305" key="3"/>
<protein>
    <recommendedName>
        <fullName>Pigment-dispersing hormone 1 peptides</fullName>
    </recommendedName>
    <component>
        <recommendedName>
            <fullName>PDH precursor-related peptide 1</fullName>
        </recommendedName>
    </component>
    <component>
        <recommendedName>
            <fullName>Pigment-dispersing hormone 1</fullName>
            <shortName>PDH 1</shortName>
        </recommendedName>
    </component>
</protein>
<accession>Q23755</accession>